<comment type="function">
    <text evidence="1 2">Has a role in the nucleotide excision repair (NER) pathway. Acts in both transcription-coupled repair (TCR) which removes damage from the transcribed strand of active genes and in global genome repair (GGR) which removes damage in untranscribed DNA. Involved in the repair of UV-induced damages where it is involved in the removal of cyclobutane pyrimidine dimers (CPDs).</text>
</comment>
<comment type="subcellular location">
    <subcellularLocation>
        <location evidence="3">Nucleus</location>
    </subcellularLocation>
</comment>
<comment type="similarity">
    <text evidence="3">Belongs to the XPC family.</text>
</comment>
<proteinExistence type="inferred from homology"/>
<evidence type="ECO:0000269" key="1">
    <source>
    </source>
</evidence>
<evidence type="ECO:0000269" key="2">
    <source>
    </source>
</evidence>
<evidence type="ECO:0000305" key="3"/>
<organism>
    <name type="scientific">Schizosaccharomyces pombe (strain 972 / ATCC 24843)</name>
    <name type="common">Fission yeast</name>
    <dbReference type="NCBI Taxonomy" id="284812"/>
    <lineage>
        <taxon>Eukaryota</taxon>
        <taxon>Fungi</taxon>
        <taxon>Dikarya</taxon>
        <taxon>Ascomycota</taxon>
        <taxon>Taphrinomycotina</taxon>
        <taxon>Schizosaccharomycetes</taxon>
        <taxon>Schizosaccharomycetales</taxon>
        <taxon>Schizosaccharomycetaceae</taxon>
        <taxon>Schizosaccharomyces</taxon>
    </lineage>
</organism>
<reference key="1">
    <citation type="journal article" date="2002" name="Nature">
        <title>The genome sequence of Schizosaccharomyces pombe.</title>
        <authorList>
            <person name="Wood V."/>
            <person name="Gwilliam R."/>
            <person name="Rajandream M.A."/>
            <person name="Lyne M.H."/>
            <person name="Lyne R."/>
            <person name="Stewart A."/>
            <person name="Sgouros J.G."/>
            <person name="Peat N."/>
            <person name="Hayles J."/>
            <person name="Baker S.G."/>
            <person name="Basham D."/>
            <person name="Bowman S."/>
            <person name="Brooks K."/>
            <person name="Brown D."/>
            <person name="Brown S."/>
            <person name="Chillingworth T."/>
            <person name="Churcher C.M."/>
            <person name="Collins M."/>
            <person name="Connor R."/>
            <person name="Cronin A."/>
            <person name="Davis P."/>
            <person name="Feltwell T."/>
            <person name="Fraser A."/>
            <person name="Gentles S."/>
            <person name="Goble A."/>
            <person name="Hamlin N."/>
            <person name="Harris D.E."/>
            <person name="Hidalgo J."/>
            <person name="Hodgson G."/>
            <person name="Holroyd S."/>
            <person name="Hornsby T."/>
            <person name="Howarth S."/>
            <person name="Huckle E.J."/>
            <person name="Hunt S."/>
            <person name="Jagels K."/>
            <person name="James K.D."/>
            <person name="Jones L."/>
            <person name="Jones M."/>
            <person name="Leather S."/>
            <person name="McDonald S."/>
            <person name="McLean J."/>
            <person name="Mooney P."/>
            <person name="Moule S."/>
            <person name="Mungall K.L."/>
            <person name="Murphy L.D."/>
            <person name="Niblett D."/>
            <person name="Odell C."/>
            <person name="Oliver K."/>
            <person name="O'Neil S."/>
            <person name="Pearson D."/>
            <person name="Quail M.A."/>
            <person name="Rabbinowitsch E."/>
            <person name="Rutherford K.M."/>
            <person name="Rutter S."/>
            <person name="Saunders D."/>
            <person name="Seeger K."/>
            <person name="Sharp S."/>
            <person name="Skelton J."/>
            <person name="Simmonds M.N."/>
            <person name="Squares R."/>
            <person name="Squares S."/>
            <person name="Stevens K."/>
            <person name="Taylor K."/>
            <person name="Taylor R.G."/>
            <person name="Tivey A."/>
            <person name="Walsh S.V."/>
            <person name="Warren T."/>
            <person name="Whitehead S."/>
            <person name="Woodward J.R."/>
            <person name="Volckaert G."/>
            <person name="Aert R."/>
            <person name="Robben J."/>
            <person name="Grymonprez B."/>
            <person name="Weltjens I."/>
            <person name="Vanstreels E."/>
            <person name="Rieger M."/>
            <person name="Schaefer M."/>
            <person name="Mueller-Auer S."/>
            <person name="Gabel C."/>
            <person name="Fuchs M."/>
            <person name="Duesterhoeft A."/>
            <person name="Fritzc C."/>
            <person name="Holzer E."/>
            <person name="Moestl D."/>
            <person name="Hilbert H."/>
            <person name="Borzym K."/>
            <person name="Langer I."/>
            <person name="Beck A."/>
            <person name="Lehrach H."/>
            <person name="Reinhardt R."/>
            <person name="Pohl T.M."/>
            <person name="Eger P."/>
            <person name="Zimmermann W."/>
            <person name="Wedler H."/>
            <person name="Wambutt R."/>
            <person name="Purnelle B."/>
            <person name="Goffeau A."/>
            <person name="Cadieu E."/>
            <person name="Dreano S."/>
            <person name="Gloux S."/>
            <person name="Lelaure V."/>
            <person name="Mottier S."/>
            <person name="Galibert F."/>
            <person name="Aves S.J."/>
            <person name="Xiang Z."/>
            <person name="Hunt C."/>
            <person name="Moore K."/>
            <person name="Hurst S.M."/>
            <person name="Lucas M."/>
            <person name="Rochet M."/>
            <person name="Gaillardin C."/>
            <person name="Tallada V.A."/>
            <person name="Garzon A."/>
            <person name="Thode G."/>
            <person name="Daga R.R."/>
            <person name="Cruzado L."/>
            <person name="Jimenez J."/>
            <person name="Sanchez M."/>
            <person name="del Rey F."/>
            <person name="Benito J."/>
            <person name="Dominguez A."/>
            <person name="Revuelta J.L."/>
            <person name="Moreno S."/>
            <person name="Armstrong J."/>
            <person name="Forsburg S.L."/>
            <person name="Cerutti L."/>
            <person name="Lowe T."/>
            <person name="McCombie W.R."/>
            <person name="Paulsen I."/>
            <person name="Potashkin J."/>
            <person name="Shpakovski G.V."/>
            <person name="Ussery D."/>
            <person name="Barrell B.G."/>
            <person name="Nurse P."/>
        </authorList>
    </citation>
    <scope>NUCLEOTIDE SEQUENCE [LARGE SCALE GENOMIC DNA]</scope>
    <source>
        <strain>972 / ATCC 24843</strain>
    </source>
</reference>
<reference key="2">
    <citation type="journal article" date="2003" name="Genetics">
        <title>Repair of damaged and mismatched DNA by the XPC homologues Rhp41 and Rhp42 of fission yeast.</title>
        <authorList>
            <person name="Marti T.M."/>
            <person name="Kunz C."/>
            <person name="Fleck O."/>
        </authorList>
    </citation>
    <scope>FUNCTION</scope>
</reference>
<reference key="3">
    <citation type="journal article" date="2002" name="DNA Repair">
        <title>Two budding yeast RAD4 homologs in fission yeast play different roles in the repair of UV-induced DNA damage.</title>
        <authorList>
            <person name="Fukumoto Y."/>
            <person name="Hiyama H."/>
            <person name="Yokoi M."/>
            <person name="Nakaseko Y."/>
            <person name="Yanagida M."/>
            <person name="Hanaoka F."/>
        </authorList>
    </citation>
    <scope>FUNCTION</scope>
</reference>
<name>RHP41_SCHPO</name>
<sequence length="638" mass="73519">MMSDEDNTYSDDEEWLDLDLGLPNNDIKTAPILNSSLLSSAVHGERLIQERPTHDFGDVEATVDRTVEKRSRLKITSVDRKIRLQIHQLHLLCLTYHLCTRNTWCDDNRLNYLVKYIPPGIRVSLHPSSQKSQMIRNKTFLHGLAGLVEVWKRKYKITTNGLRKPNYGLLQNNSLISESLSLEEFCKNSKLLSGSRDYGTQLFASILRNLNVPTRLVFSLQVLSFRFKGAINEASSHEIVPAWSQQMENDSSSDISESAHITSRFRKRRKIIQPSFSNLSHLDASDIVTEDTKLKVIDSPKPVFWVEAFNKAMQKWVCVDPFGDASVIGKYRRFEPASSDHLNQMTYVFAIEANGYVKDVTRKYCLHYYKILKNRVEIFPFGKAWMNRIFSKIGKPRDFYNDMDAIEDAELLRLEQSEGIPRNIQDLKDHPLFVLERHLKKNQAIKTGKSCGRINTKNGVELVYPRKYVSNGFSAEHWYRKGRIIKPGAQPLKHVKNGDKVLPLYDEEATQLYTPKPVVANIVPKNAYGNIDLYVPSMLPYGAYHCRKRCALAAAKFLEIDYAKAVVGFDFQRKYSKPKLEGVVVSKRYEEAIDLIAEEIDQEEKEAEARNVRKTCLLLWKRLITGLRIRQRVFEEYG</sequence>
<keyword id="KW-0227">DNA damage</keyword>
<keyword id="KW-0234">DNA repair</keyword>
<keyword id="KW-0238">DNA-binding</keyword>
<keyword id="KW-0539">Nucleus</keyword>
<keyword id="KW-1185">Reference proteome</keyword>
<feature type="chain" id="PRO_0000218296" description="DNA repair protein rhp41">
    <location>
        <begin position="1"/>
        <end position="638"/>
    </location>
</feature>
<gene>
    <name type="primary">rhp41</name>
    <name type="synonym">rhp4a</name>
    <name type="ORF">SPAC12B10.12c</name>
</gene>
<accession>Q10445</accession>
<dbReference type="EMBL" id="CU329670">
    <property type="protein sequence ID" value="CAA94702.1"/>
    <property type="molecule type" value="Genomic_DNA"/>
</dbReference>
<dbReference type="PIR" id="T37579">
    <property type="entry name" value="T37579"/>
</dbReference>
<dbReference type="RefSeq" id="NP_594644.1">
    <property type="nucleotide sequence ID" value="NM_001020072.2"/>
</dbReference>
<dbReference type="SMR" id="Q10445"/>
<dbReference type="BioGRID" id="279407">
    <property type="interactions" value="29"/>
</dbReference>
<dbReference type="FunCoup" id="Q10445">
    <property type="interactions" value="219"/>
</dbReference>
<dbReference type="STRING" id="284812.Q10445"/>
<dbReference type="PaxDb" id="4896-SPAC12B10.12c.1"/>
<dbReference type="EnsemblFungi" id="SPAC12B10.12c.1">
    <property type="protein sequence ID" value="SPAC12B10.12c.1:pep"/>
    <property type="gene ID" value="SPAC12B10.12c"/>
</dbReference>
<dbReference type="GeneID" id="2542967"/>
<dbReference type="KEGG" id="spo:2542967"/>
<dbReference type="PomBase" id="SPAC12B10.12c">
    <property type="gene designation" value="rhp41"/>
</dbReference>
<dbReference type="VEuPathDB" id="FungiDB:SPAC12B10.12c"/>
<dbReference type="eggNOG" id="KOG2179">
    <property type="taxonomic scope" value="Eukaryota"/>
</dbReference>
<dbReference type="HOGENOM" id="CLU_003639_0_0_1"/>
<dbReference type="InParanoid" id="Q10445"/>
<dbReference type="OMA" id="IPEWLMS"/>
<dbReference type="PhylomeDB" id="Q10445"/>
<dbReference type="PRO" id="PR:Q10445"/>
<dbReference type="Proteomes" id="UP000002485">
    <property type="component" value="Chromosome I"/>
</dbReference>
<dbReference type="GO" id="GO:0005737">
    <property type="term" value="C:cytoplasm"/>
    <property type="evidence" value="ECO:0000318"/>
    <property type="project" value="GO_Central"/>
</dbReference>
<dbReference type="GO" id="GO:0072686">
    <property type="term" value="C:mitotic spindle"/>
    <property type="evidence" value="ECO:0007005"/>
    <property type="project" value="PomBase"/>
</dbReference>
<dbReference type="GO" id="GO:0000111">
    <property type="term" value="C:nucleotide-excision repair factor 2 complex"/>
    <property type="evidence" value="ECO:0000318"/>
    <property type="project" value="GO_Central"/>
</dbReference>
<dbReference type="GO" id="GO:0005634">
    <property type="term" value="C:nucleus"/>
    <property type="evidence" value="ECO:0007005"/>
    <property type="project" value="PomBase"/>
</dbReference>
<dbReference type="GO" id="GO:0071942">
    <property type="term" value="C:XPC complex"/>
    <property type="evidence" value="ECO:0000318"/>
    <property type="project" value="GO_Central"/>
</dbReference>
<dbReference type="GO" id="GO:0003684">
    <property type="term" value="F:damaged DNA binding"/>
    <property type="evidence" value="ECO:0000318"/>
    <property type="project" value="GO_Central"/>
</dbReference>
<dbReference type="GO" id="GO:0003697">
    <property type="term" value="F:single-stranded DNA binding"/>
    <property type="evidence" value="ECO:0000318"/>
    <property type="project" value="GO_Central"/>
</dbReference>
<dbReference type="GO" id="GO:0006298">
    <property type="term" value="P:mismatch repair"/>
    <property type="evidence" value="ECO:0000316"/>
    <property type="project" value="PomBase"/>
</dbReference>
<dbReference type="GO" id="GO:0006289">
    <property type="term" value="P:nucleotide-excision repair"/>
    <property type="evidence" value="ECO:0000316"/>
    <property type="project" value="PomBase"/>
</dbReference>
<dbReference type="Gene3D" id="2.20.20.110">
    <property type="entry name" value="Rad4, beta-hairpin domain BHD1"/>
    <property type="match status" value="1"/>
</dbReference>
<dbReference type="Gene3D" id="3.30.60.290">
    <property type="entry name" value="Rad4, beta-hairpin domain BHD2"/>
    <property type="match status" value="1"/>
</dbReference>
<dbReference type="Gene3D" id="3.30.70.2460">
    <property type="entry name" value="Rad4, beta-hairpin domain BHD3"/>
    <property type="match status" value="1"/>
</dbReference>
<dbReference type="Gene3D" id="3.90.260.10">
    <property type="entry name" value="Transglutaminase-like"/>
    <property type="match status" value="1"/>
</dbReference>
<dbReference type="InterPro" id="IPR018327">
    <property type="entry name" value="BHD_2"/>
</dbReference>
<dbReference type="InterPro" id="IPR004583">
    <property type="entry name" value="DNA_repair_Rad4"/>
</dbReference>
<dbReference type="InterPro" id="IPR018026">
    <property type="entry name" value="DNA_repair_Rad4-like"/>
</dbReference>
<dbReference type="InterPro" id="IPR038765">
    <property type="entry name" value="Papain-like_cys_pep_sf"/>
</dbReference>
<dbReference type="InterPro" id="IPR018325">
    <property type="entry name" value="Rad4/PNGase_transGLS-fold"/>
</dbReference>
<dbReference type="InterPro" id="IPR018326">
    <property type="entry name" value="Rad4_beta-hairpin_dom1"/>
</dbReference>
<dbReference type="InterPro" id="IPR018328">
    <property type="entry name" value="Rad4_beta-hairpin_dom3"/>
</dbReference>
<dbReference type="InterPro" id="IPR042488">
    <property type="entry name" value="Rad4_BHD3_sf"/>
</dbReference>
<dbReference type="InterPro" id="IPR036985">
    <property type="entry name" value="Transglutaminase-like_sf"/>
</dbReference>
<dbReference type="NCBIfam" id="TIGR00605">
    <property type="entry name" value="rad4"/>
    <property type="match status" value="1"/>
</dbReference>
<dbReference type="PANTHER" id="PTHR12135:SF0">
    <property type="entry name" value="DNA REPAIR PROTEIN COMPLEMENTING XP-C CELLS"/>
    <property type="match status" value="1"/>
</dbReference>
<dbReference type="PANTHER" id="PTHR12135">
    <property type="entry name" value="DNA REPAIR PROTEIN XP-C / RAD4"/>
    <property type="match status" value="1"/>
</dbReference>
<dbReference type="Pfam" id="PF10403">
    <property type="entry name" value="BHD_1"/>
    <property type="match status" value="1"/>
</dbReference>
<dbReference type="Pfam" id="PF10405">
    <property type="entry name" value="BHD_3"/>
    <property type="match status" value="1"/>
</dbReference>
<dbReference type="Pfam" id="PF03835">
    <property type="entry name" value="Rad4"/>
    <property type="match status" value="1"/>
</dbReference>
<dbReference type="SMART" id="SM01030">
    <property type="entry name" value="BHD_1"/>
    <property type="match status" value="1"/>
</dbReference>
<dbReference type="SMART" id="SM01031">
    <property type="entry name" value="BHD_2"/>
    <property type="match status" value="1"/>
</dbReference>
<dbReference type="SMART" id="SM01032">
    <property type="entry name" value="BHD_3"/>
    <property type="match status" value="1"/>
</dbReference>
<dbReference type="SUPFAM" id="SSF54001">
    <property type="entry name" value="Cysteine proteinases"/>
    <property type="match status" value="1"/>
</dbReference>
<protein>
    <recommendedName>
        <fullName>DNA repair protein rhp41</fullName>
    </recommendedName>
</protein>